<dbReference type="EC" id="2.5.1.78" evidence="1"/>
<dbReference type="EMBL" id="AP009484">
    <property type="protein sequence ID" value="BAH18159.1"/>
    <property type="molecule type" value="Genomic_DNA"/>
</dbReference>
<dbReference type="RefSeq" id="WP_012657357.1">
    <property type="nucleotide sequence ID" value="NC_011999.1"/>
</dbReference>
<dbReference type="SMR" id="B9E7J1"/>
<dbReference type="STRING" id="458233.MCCL_1452"/>
<dbReference type="KEGG" id="mcl:MCCL_1452"/>
<dbReference type="eggNOG" id="COG0054">
    <property type="taxonomic scope" value="Bacteria"/>
</dbReference>
<dbReference type="HOGENOM" id="CLU_089358_1_1_9"/>
<dbReference type="OrthoDB" id="9809709at2"/>
<dbReference type="UniPathway" id="UPA00275">
    <property type="reaction ID" value="UER00404"/>
</dbReference>
<dbReference type="Proteomes" id="UP000001383">
    <property type="component" value="Chromosome"/>
</dbReference>
<dbReference type="GO" id="GO:0005829">
    <property type="term" value="C:cytosol"/>
    <property type="evidence" value="ECO:0007669"/>
    <property type="project" value="TreeGrafter"/>
</dbReference>
<dbReference type="GO" id="GO:0009349">
    <property type="term" value="C:riboflavin synthase complex"/>
    <property type="evidence" value="ECO:0007669"/>
    <property type="project" value="InterPro"/>
</dbReference>
<dbReference type="GO" id="GO:0000906">
    <property type="term" value="F:6,7-dimethyl-8-ribityllumazine synthase activity"/>
    <property type="evidence" value="ECO:0007669"/>
    <property type="project" value="UniProtKB-UniRule"/>
</dbReference>
<dbReference type="GO" id="GO:0009231">
    <property type="term" value="P:riboflavin biosynthetic process"/>
    <property type="evidence" value="ECO:0007669"/>
    <property type="project" value="UniProtKB-UniRule"/>
</dbReference>
<dbReference type="CDD" id="cd09209">
    <property type="entry name" value="Lumazine_synthase-I"/>
    <property type="match status" value="1"/>
</dbReference>
<dbReference type="FunFam" id="3.40.50.960:FF:000001">
    <property type="entry name" value="6,7-dimethyl-8-ribityllumazine synthase"/>
    <property type="match status" value="1"/>
</dbReference>
<dbReference type="Gene3D" id="3.40.50.960">
    <property type="entry name" value="Lumazine/riboflavin synthase"/>
    <property type="match status" value="1"/>
</dbReference>
<dbReference type="HAMAP" id="MF_00178">
    <property type="entry name" value="Lumazine_synth"/>
    <property type="match status" value="1"/>
</dbReference>
<dbReference type="InterPro" id="IPR034964">
    <property type="entry name" value="LS"/>
</dbReference>
<dbReference type="InterPro" id="IPR002180">
    <property type="entry name" value="LS/RS"/>
</dbReference>
<dbReference type="InterPro" id="IPR036467">
    <property type="entry name" value="LS/RS_sf"/>
</dbReference>
<dbReference type="NCBIfam" id="TIGR00114">
    <property type="entry name" value="lumazine-synth"/>
    <property type="match status" value="1"/>
</dbReference>
<dbReference type="NCBIfam" id="NF000812">
    <property type="entry name" value="PRK00061.1-4"/>
    <property type="match status" value="1"/>
</dbReference>
<dbReference type="PANTHER" id="PTHR21058:SF0">
    <property type="entry name" value="6,7-DIMETHYL-8-RIBITYLLUMAZINE SYNTHASE"/>
    <property type="match status" value="1"/>
</dbReference>
<dbReference type="PANTHER" id="PTHR21058">
    <property type="entry name" value="6,7-DIMETHYL-8-RIBITYLLUMAZINE SYNTHASE DMRL SYNTHASE LUMAZINE SYNTHASE"/>
    <property type="match status" value="1"/>
</dbReference>
<dbReference type="Pfam" id="PF00885">
    <property type="entry name" value="DMRL_synthase"/>
    <property type="match status" value="1"/>
</dbReference>
<dbReference type="SUPFAM" id="SSF52121">
    <property type="entry name" value="Lumazine synthase"/>
    <property type="match status" value="1"/>
</dbReference>
<evidence type="ECO:0000255" key="1">
    <source>
        <dbReference type="HAMAP-Rule" id="MF_00178"/>
    </source>
</evidence>
<gene>
    <name evidence="1" type="primary">ribH</name>
    <name type="ordered locus">MCCL_1452</name>
</gene>
<protein>
    <recommendedName>
        <fullName evidence="1">6,7-dimethyl-8-ribityllumazine synthase</fullName>
        <shortName evidence="1">DMRL synthase</shortName>
        <shortName evidence="1">LS</shortName>
        <shortName evidence="1">Lumazine synthase</shortName>
        <ecNumber evidence="1">2.5.1.78</ecNumber>
    </recommendedName>
</protein>
<organism>
    <name type="scientific">Macrococcus caseolyticus (strain JCSC5402)</name>
    <name type="common">Macrococcoides caseolyticum</name>
    <dbReference type="NCBI Taxonomy" id="458233"/>
    <lineage>
        <taxon>Bacteria</taxon>
        <taxon>Bacillati</taxon>
        <taxon>Bacillota</taxon>
        <taxon>Bacilli</taxon>
        <taxon>Bacillales</taxon>
        <taxon>Staphylococcaceae</taxon>
        <taxon>Macrococcoides</taxon>
    </lineage>
</organism>
<reference key="1">
    <citation type="journal article" date="2009" name="J. Bacteriol.">
        <title>Complete genome sequence of Macrococcus caseolyticus strain JCSCS5402, reflecting the ancestral genome of the human-pathogenic staphylococci.</title>
        <authorList>
            <person name="Baba T."/>
            <person name="Kuwahara-Arai K."/>
            <person name="Uchiyama I."/>
            <person name="Takeuchi F."/>
            <person name="Ito T."/>
            <person name="Hiramatsu K."/>
        </authorList>
    </citation>
    <scope>NUCLEOTIDE SEQUENCE [LARGE SCALE GENOMIC DNA]</scope>
    <source>
        <strain>JCSC5402</strain>
    </source>
</reference>
<name>RISB_MACCJ</name>
<comment type="function">
    <text evidence="1">Catalyzes the formation of 6,7-dimethyl-8-ribityllumazine by condensation of 5-amino-6-(D-ribitylamino)uracil with 3,4-dihydroxy-2-butanone 4-phosphate. This is the penultimate step in the biosynthesis of riboflavin.</text>
</comment>
<comment type="catalytic activity">
    <reaction evidence="1">
        <text>(2S)-2-hydroxy-3-oxobutyl phosphate + 5-amino-6-(D-ribitylamino)uracil = 6,7-dimethyl-8-(1-D-ribityl)lumazine + phosphate + 2 H2O + H(+)</text>
        <dbReference type="Rhea" id="RHEA:26152"/>
        <dbReference type="ChEBI" id="CHEBI:15377"/>
        <dbReference type="ChEBI" id="CHEBI:15378"/>
        <dbReference type="ChEBI" id="CHEBI:15934"/>
        <dbReference type="ChEBI" id="CHEBI:43474"/>
        <dbReference type="ChEBI" id="CHEBI:58201"/>
        <dbReference type="ChEBI" id="CHEBI:58830"/>
        <dbReference type="EC" id="2.5.1.78"/>
    </reaction>
</comment>
<comment type="pathway">
    <text evidence="1">Cofactor biosynthesis; riboflavin biosynthesis; riboflavin from 2-hydroxy-3-oxobutyl phosphate and 5-amino-6-(D-ribitylamino)uracil: step 1/2.</text>
</comment>
<comment type="subunit">
    <text evidence="1">Forms an icosahedral capsid composed of 60 subunits, arranged as a dodecamer of pentamers.</text>
</comment>
<comment type="similarity">
    <text evidence="1">Belongs to the DMRL synthase family.</text>
</comment>
<proteinExistence type="inferred from homology"/>
<keyword id="KW-1185">Reference proteome</keyword>
<keyword id="KW-0686">Riboflavin biosynthesis</keyword>
<keyword id="KW-0808">Transferase</keyword>
<accession>B9E7J1</accession>
<sequence length="154" mass="16542">MNYSAKLTGEGLKIAVVTSRFNHFITDRLTEGAIDTLERHGVVKEDIDIFLVPGAFELPFVASKLAQKKKYDAVITLGCVIRGATTHYDYVCNEAAKGIAKAGEYGTPVIFGVVTTESIEQAIERAGTKAGNKGGEAAISAIEMANLNKMMDEL</sequence>
<feature type="chain" id="PRO_1000195495" description="6,7-dimethyl-8-ribityllumazine synthase">
    <location>
        <begin position="1"/>
        <end position="154"/>
    </location>
</feature>
<feature type="active site" description="Proton donor" evidence="1">
    <location>
        <position position="87"/>
    </location>
</feature>
<feature type="binding site" evidence="1">
    <location>
        <position position="21"/>
    </location>
    <ligand>
        <name>5-amino-6-(D-ribitylamino)uracil</name>
        <dbReference type="ChEBI" id="CHEBI:15934"/>
    </ligand>
</feature>
<feature type="binding site" evidence="1">
    <location>
        <begin position="55"/>
        <end position="57"/>
    </location>
    <ligand>
        <name>5-amino-6-(D-ribitylamino)uracil</name>
        <dbReference type="ChEBI" id="CHEBI:15934"/>
    </ligand>
</feature>
<feature type="binding site" evidence="1">
    <location>
        <begin position="79"/>
        <end position="81"/>
    </location>
    <ligand>
        <name>5-amino-6-(D-ribitylamino)uracil</name>
        <dbReference type="ChEBI" id="CHEBI:15934"/>
    </ligand>
</feature>
<feature type="binding site" evidence="1">
    <location>
        <begin position="84"/>
        <end position="85"/>
    </location>
    <ligand>
        <name>(2S)-2-hydroxy-3-oxobutyl phosphate</name>
        <dbReference type="ChEBI" id="CHEBI:58830"/>
    </ligand>
</feature>
<feature type="binding site" evidence="1">
    <location>
        <position position="111"/>
    </location>
    <ligand>
        <name>5-amino-6-(D-ribitylamino)uracil</name>
        <dbReference type="ChEBI" id="CHEBI:15934"/>
    </ligand>
</feature>
<feature type="binding site" evidence="1">
    <location>
        <position position="125"/>
    </location>
    <ligand>
        <name>(2S)-2-hydroxy-3-oxobutyl phosphate</name>
        <dbReference type="ChEBI" id="CHEBI:58830"/>
    </ligand>
</feature>